<name>KGUA_STAAW</name>
<gene>
    <name evidence="1" type="primary">gmk</name>
    <name type="ordered locus">MW1092</name>
</gene>
<protein>
    <recommendedName>
        <fullName evidence="1">Guanylate kinase</fullName>
        <ecNumber evidence="1">2.7.4.8</ecNumber>
    </recommendedName>
    <alternativeName>
        <fullName evidence="1">GMP kinase</fullName>
    </alternativeName>
</protein>
<accession>Q8NX22</accession>
<dbReference type="EC" id="2.7.4.8" evidence="1"/>
<dbReference type="EMBL" id="BA000033">
    <property type="protein sequence ID" value="BAB94957.1"/>
    <property type="molecule type" value="Genomic_DNA"/>
</dbReference>
<dbReference type="RefSeq" id="WP_000368227.1">
    <property type="nucleotide sequence ID" value="NC_003923.1"/>
</dbReference>
<dbReference type="SMR" id="Q8NX22"/>
<dbReference type="KEGG" id="sam:MW1092"/>
<dbReference type="HOGENOM" id="CLU_001715_1_2_9"/>
<dbReference type="GO" id="GO:0005829">
    <property type="term" value="C:cytosol"/>
    <property type="evidence" value="ECO:0007669"/>
    <property type="project" value="TreeGrafter"/>
</dbReference>
<dbReference type="GO" id="GO:0005524">
    <property type="term" value="F:ATP binding"/>
    <property type="evidence" value="ECO:0007669"/>
    <property type="project" value="UniProtKB-UniRule"/>
</dbReference>
<dbReference type="GO" id="GO:0004385">
    <property type="term" value="F:guanylate kinase activity"/>
    <property type="evidence" value="ECO:0007669"/>
    <property type="project" value="UniProtKB-UniRule"/>
</dbReference>
<dbReference type="CDD" id="cd00071">
    <property type="entry name" value="GMPK"/>
    <property type="match status" value="1"/>
</dbReference>
<dbReference type="FunFam" id="3.40.50.300:FF:000855">
    <property type="entry name" value="Guanylate kinase"/>
    <property type="match status" value="1"/>
</dbReference>
<dbReference type="FunFam" id="3.30.63.10:FF:000002">
    <property type="entry name" value="Guanylate kinase 1"/>
    <property type="match status" value="1"/>
</dbReference>
<dbReference type="Gene3D" id="3.30.63.10">
    <property type="entry name" value="Guanylate Kinase phosphate binding domain"/>
    <property type="match status" value="1"/>
</dbReference>
<dbReference type="Gene3D" id="3.40.50.300">
    <property type="entry name" value="P-loop containing nucleotide triphosphate hydrolases"/>
    <property type="match status" value="1"/>
</dbReference>
<dbReference type="HAMAP" id="MF_00328">
    <property type="entry name" value="Guanylate_kinase"/>
    <property type="match status" value="1"/>
</dbReference>
<dbReference type="InterPro" id="IPR008145">
    <property type="entry name" value="GK/Ca_channel_bsu"/>
</dbReference>
<dbReference type="InterPro" id="IPR008144">
    <property type="entry name" value="Guanylate_kin-like_dom"/>
</dbReference>
<dbReference type="InterPro" id="IPR017665">
    <property type="entry name" value="Guanylate_kinase"/>
</dbReference>
<dbReference type="InterPro" id="IPR020590">
    <property type="entry name" value="Guanylate_kinase_CS"/>
</dbReference>
<dbReference type="InterPro" id="IPR027417">
    <property type="entry name" value="P-loop_NTPase"/>
</dbReference>
<dbReference type="NCBIfam" id="TIGR03263">
    <property type="entry name" value="guanyl_kin"/>
    <property type="match status" value="1"/>
</dbReference>
<dbReference type="PANTHER" id="PTHR23117:SF13">
    <property type="entry name" value="GUANYLATE KINASE"/>
    <property type="match status" value="1"/>
</dbReference>
<dbReference type="PANTHER" id="PTHR23117">
    <property type="entry name" value="GUANYLATE KINASE-RELATED"/>
    <property type="match status" value="1"/>
</dbReference>
<dbReference type="Pfam" id="PF00625">
    <property type="entry name" value="Guanylate_kin"/>
    <property type="match status" value="1"/>
</dbReference>
<dbReference type="SMART" id="SM00072">
    <property type="entry name" value="GuKc"/>
    <property type="match status" value="1"/>
</dbReference>
<dbReference type="SUPFAM" id="SSF52540">
    <property type="entry name" value="P-loop containing nucleoside triphosphate hydrolases"/>
    <property type="match status" value="1"/>
</dbReference>
<dbReference type="PROSITE" id="PS00856">
    <property type="entry name" value="GUANYLATE_KINASE_1"/>
    <property type="match status" value="1"/>
</dbReference>
<dbReference type="PROSITE" id="PS50052">
    <property type="entry name" value="GUANYLATE_KINASE_2"/>
    <property type="match status" value="1"/>
</dbReference>
<sequence length="207" mass="24037">MDNEKGLLIVLSGPSGVGKGTVRKRIFEDPSTSYKYSISMTTRQMREGEVDGVDYFFKTRDAFEALIKDDQFIEYAEYVGNYYGTPVQYVKDTMDEGHDVFLEIEVEGAKQVRKKFPDALFIFLAPPSLEHLRERLVGRGTESDEKIQSRINEARKEVEMMNLYDYVVVNDEVELAKNRIQCIVEAEHLKRERVEAKYRKMILEAKK</sequence>
<comment type="function">
    <text evidence="1">Essential for recycling GMP and indirectly, cGMP.</text>
</comment>
<comment type="catalytic activity">
    <reaction evidence="1">
        <text>GMP + ATP = GDP + ADP</text>
        <dbReference type="Rhea" id="RHEA:20780"/>
        <dbReference type="ChEBI" id="CHEBI:30616"/>
        <dbReference type="ChEBI" id="CHEBI:58115"/>
        <dbReference type="ChEBI" id="CHEBI:58189"/>
        <dbReference type="ChEBI" id="CHEBI:456216"/>
        <dbReference type="EC" id="2.7.4.8"/>
    </reaction>
</comment>
<comment type="subcellular location">
    <subcellularLocation>
        <location evidence="1">Cytoplasm</location>
    </subcellularLocation>
</comment>
<comment type="similarity">
    <text evidence="1">Belongs to the guanylate kinase family.</text>
</comment>
<feature type="chain" id="PRO_0000170608" description="Guanylate kinase">
    <location>
        <begin position="1"/>
        <end position="207"/>
    </location>
</feature>
<feature type="domain" description="Guanylate kinase-like" evidence="1">
    <location>
        <begin position="6"/>
        <end position="185"/>
    </location>
</feature>
<feature type="binding site" evidence="1">
    <location>
        <begin position="13"/>
        <end position="20"/>
    </location>
    <ligand>
        <name>ATP</name>
        <dbReference type="ChEBI" id="CHEBI:30616"/>
    </ligand>
</feature>
<keyword id="KW-0067">ATP-binding</keyword>
<keyword id="KW-0963">Cytoplasm</keyword>
<keyword id="KW-0418">Kinase</keyword>
<keyword id="KW-0547">Nucleotide-binding</keyword>
<keyword id="KW-0808">Transferase</keyword>
<reference key="1">
    <citation type="journal article" date="2002" name="Lancet">
        <title>Genome and virulence determinants of high virulence community-acquired MRSA.</title>
        <authorList>
            <person name="Baba T."/>
            <person name="Takeuchi F."/>
            <person name="Kuroda M."/>
            <person name="Yuzawa H."/>
            <person name="Aoki K."/>
            <person name="Oguchi A."/>
            <person name="Nagai Y."/>
            <person name="Iwama N."/>
            <person name="Asano K."/>
            <person name="Naimi T."/>
            <person name="Kuroda H."/>
            <person name="Cui L."/>
            <person name="Yamamoto K."/>
            <person name="Hiramatsu K."/>
        </authorList>
    </citation>
    <scope>NUCLEOTIDE SEQUENCE [LARGE SCALE GENOMIC DNA]</scope>
    <source>
        <strain>MW2</strain>
    </source>
</reference>
<organism>
    <name type="scientific">Staphylococcus aureus (strain MW2)</name>
    <dbReference type="NCBI Taxonomy" id="196620"/>
    <lineage>
        <taxon>Bacteria</taxon>
        <taxon>Bacillati</taxon>
        <taxon>Bacillota</taxon>
        <taxon>Bacilli</taxon>
        <taxon>Bacillales</taxon>
        <taxon>Staphylococcaceae</taxon>
        <taxon>Staphylococcus</taxon>
    </lineage>
</organism>
<evidence type="ECO:0000255" key="1">
    <source>
        <dbReference type="HAMAP-Rule" id="MF_00328"/>
    </source>
</evidence>
<proteinExistence type="inferred from homology"/>